<keyword id="KW-0687">Ribonucleoprotein</keyword>
<keyword id="KW-0689">Ribosomal protein</keyword>
<keyword id="KW-0694">RNA-binding</keyword>
<keyword id="KW-0699">rRNA-binding</keyword>
<keyword id="KW-0820">tRNA-binding</keyword>
<protein>
    <recommendedName>
        <fullName evidence="1">Large ribosomal subunit protein uL16</fullName>
    </recommendedName>
    <alternativeName>
        <fullName evidence="3">50S ribosomal protein L16</fullName>
    </alternativeName>
</protein>
<comment type="function">
    <text evidence="1">Binds 23S rRNA and is also seen to make contacts with the A and possibly P site tRNAs.</text>
</comment>
<comment type="subunit">
    <text evidence="1">Part of the 50S ribosomal subunit.</text>
</comment>
<comment type="similarity">
    <text evidence="1">Belongs to the universal ribosomal protein uL16 family.</text>
</comment>
<proteinExistence type="inferred from homology"/>
<organism>
    <name type="scientific">Staphylococcus haemolyticus (strain JCSC1435)</name>
    <dbReference type="NCBI Taxonomy" id="279808"/>
    <lineage>
        <taxon>Bacteria</taxon>
        <taxon>Bacillati</taxon>
        <taxon>Bacillota</taxon>
        <taxon>Bacilli</taxon>
        <taxon>Bacillales</taxon>
        <taxon>Staphylococcaceae</taxon>
        <taxon>Staphylococcus</taxon>
    </lineage>
</organism>
<sequence>MLLPKRVKYRRQHRPKTTGRSKGGNYVTFGEYGLQATTTSWITSRQIESARIAMTRYMKRGGKVWIKIFPHTPYTKKPLEVRMGAGKGAVEGWIAVVKPGRILFEVAGVSEEVAREALRLASHKLPVKTKFVKREELGGETNES</sequence>
<evidence type="ECO:0000255" key="1">
    <source>
        <dbReference type="HAMAP-Rule" id="MF_01342"/>
    </source>
</evidence>
<evidence type="ECO:0000256" key="2">
    <source>
        <dbReference type="SAM" id="MobiDB-lite"/>
    </source>
</evidence>
<evidence type="ECO:0000305" key="3"/>
<feature type="chain" id="PRO_0000062211" description="Large ribosomal subunit protein uL16">
    <location>
        <begin position="1"/>
        <end position="144"/>
    </location>
</feature>
<feature type="region of interest" description="Disordered" evidence="2">
    <location>
        <begin position="1"/>
        <end position="23"/>
    </location>
</feature>
<feature type="compositionally biased region" description="Basic residues" evidence="2">
    <location>
        <begin position="1"/>
        <end position="19"/>
    </location>
</feature>
<name>RL16_STAHJ</name>
<dbReference type="EMBL" id="AP006716">
    <property type="protein sequence ID" value="BAE04118.1"/>
    <property type="molecule type" value="Genomic_DNA"/>
</dbReference>
<dbReference type="RefSeq" id="WP_002432945.1">
    <property type="nucleotide sequence ID" value="NC_007168.1"/>
</dbReference>
<dbReference type="SMR" id="Q4L8A7"/>
<dbReference type="GeneID" id="93780198"/>
<dbReference type="KEGG" id="sha:SH0809"/>
<dbReference type="eggNOG" id="COG0197">
    <property type="taxonomic scope" value="Bacteria"/>
</dbReference>
<dbReference type="HOGENOM" id="CLU_078858_2_1_9"/>
<dbReference type="OrthoDB" id="9802589at2"/>
<dbReference type="Proteomes" id="UP000000543">
    <property type="component" value="Chromosome"/>
</dbReference>
<dbReference type="GO" id="GO:0022625">
    <property type="term" value="C:cytosolic large ribosomal subunit"/>
    <property type="evidence" value="ECO:0007669"/>
    <property type="project" value="TreeGrafter"/>
</dbReference>
<dbReference type="GO" id="GO:0019843">
    <property type="term" value="F:rRNA binding"/>
    <property type="evidence" value="ECO:0007669"/>
    <property type="project" value="UniProtKB-UniRule"/>
</dbReference>
<dbReference type="GO" id="GO:0003735">
    <property type="term" value="F:structural constituent of ribosome"/>
    <property type="evidence" value="ECO:0007669"/>
    <property type="project" value="InterPro"/>
</dbReference>
<dbReference type="GO" id="GO:0000049">
    <property type="term" value="F:tRNA binding"/>
    <property type="evidence" value="ECO:0007669"/>
    <property type="project" value="UniProtKB-KW"/>
</dbReference>
<dbReference type="GO" id="GO:0006412">
    <property type="term" value="P:translation"/>
    <property type="evidence" value="ECO:0007669"/>
    <property type="project" value="UniProtKB-UniRule"/>
</dbReference>
<dbReference type="CDD" id="cd01433">
    <property type="entry name" value="Ribosomal_L16_L10e"/>
    <property type="match status" value="1"/>
</dbReference>
<dbReference type="FunFam" id="3.90.1170.10:FF:000001">
    <property type="entry name" value="50S ribosomal protein L16"/>
    <property type="match status" value="1"/>
</dbReference>
<dbReference type="Gene3D" id="3.90.1170.10">
    <property type="entry name" value="Ribosomal protein L10e/L16"/>
    <property type="match status" value="1"/>
</dbReference>
<dbReference type="HAMAP" id="MF_01342">
    <property type="entry name" value="Ribosomal_uL16"/>
    <property type="match status" value="1"/>
</dbReference>
<dbReference type="InterPro" id="IPR047873">
    <property type="entry name" value="Ribosomal_uL16"/>
</dbReference>
<dbReference type="InterPro" id="IPR000114">
    <property type="entry name" value="Ribosomal_uL16_bact-type"/>
</dbReference>
<dbReference type="InterPro" id="IPR020798">
    <property type="entry name" value="Ribosomal_uL16_CS"/>
</dbReference>
<dbReference type="InterPro" id="IPR016180">
    <property type="entry name" value="Ribosomal_uL16_dom"/>
</dbReference>
<dbReference type="InterPro" id="IPR036920">
    <property type="entry name" value="Ribosomal_uL16_sf"/>
</dbReference>
<dbReference type="NCBIfam" id="TIGR01164">
    <property type="entry name" value="rplP_bact"/>
    <property type="match status" value="1"/>
</dbReference>
<dbReference type="PANTHER" id="PTHR12220">
    <property type="entry name" value="50S/60S RIBOSOMAL PROTEIN L16"/>
    <property type="match status" value="1"/>
</dbReference>
<dbReference type="PANTHER" id="PTHR12220:SF13">
    <property type="entry name" value="LARGE RIBOSOMAL SUBUNIT PROTEIN UL16M"/>
    <property type="match status" value="1"/>
</dbReference>
<dbReference type="Pfam" id="PF00252">
    <property type="entry name" value="Ribosomal_L16"/>
    <property type="match status" value="1"/>
</dbReference>
<dbReference type="PRINTS" id="PR00060">
    <property type="entry name" value="RIBOSOMALL16"/>
</dbReference>
<dbReference type="SUPFAM" id="SSF54686">
    <property type="entry name" value="Ribosomal protein L16p/L10e"/>
    <property type="match status" value="1"/>
</dbReference>
<dbReference type="PROSITE" id="PS00586">
    <property type="entry name" value="RIBOSOMAL_L16_1"/>
    <property type="match status" value="1"/>
</dbReference>
<dbReference type="PROSITE" id="PS00701">
    <property type="entry name" value="RIBOSOMAL_L16_2"/>
    <property type="match status" value="1"/>
</dbReference>
<gene>
    <name evidence="1" type="primary">rplP</name>
    <name type="ordered locus">SH0809</name>
</gene>
<reference key="1">
    <citation type="journal article" date="2005" name="J. Bacteriol.">
        <title>Whole-genome sequencing of Staphylococcus haemolyticus uncovers the extreme plasticity of its genome and the evolution of human-colonizing staphylococcal species.</title>
        <authorList>
            <person name="Takeuchi F."/>
            <person name="Watanabe S."/>
            <person name="Baba T."/>
            <person name="Yuzawa H."/>
            <person name="Ito T."/>
            <person name="Morimoto Y."/>
            <person name="Kuroda M."/>
            <person name="Cui L."/>
            <person name="Takahashi M."/>
            <person name="Ankai A."/>
            <person name="Baba S."/>
            <person name="Fukui S."/>
            <person name="Lee J.C."/>
            <person name="Hiramatsu K."/>
        </authorList>
    </citation>
    <scope>NUCLEOTIDE SEQUENCE [LARGE SCALE GENOMIC DNA]</scope>
    <source>
        <strain>JCSC1435</strain>
    </source>
</reference>
<accession>Q4L8A7</accession>